<reference key="1">
    <citation type="journal article" date="2008" name="Genome Biol.">
        <title>The complete genome, comparative and functional analysis of Stenotrophomonas maltophilia reveals an organism heavily shielded by drug resistance determinants.</title>
        <authorList>
            <person name="Crossman L.C."/>
            <person name="Gould V.C."/>
            <person name="Dow J.M."/>
            <person name="Vernikos G.S."/>
            <person name="Okazaki A."/>
            <person name="Sebaihia M."/>
            <person name="Saunders D."/>
            <person name="Arrowsmith C."/>
            <person name="Carver T."/>
            <person name="Peters N."/>
            <person name="Adlem E."/>
            <person name="Kerhornou A."/>
            <person name="Lord A."/>
            <person name="Murphy L."/>
            <person name="Seeger K."/>
            <person name="Squares R."/>
            <person name="Rutter S."/>
            <person name="Quail M.A."/>
            <person name="Rajandream M.A."/>
            <person name="Harris D."/>
            <person name="Churcher C."/>
            <person name="Bentley S.D."/>
            <person name="Parkhill J."/>
            <person name="Thomson N.R."/>
            <person name="Avison M.B."/>
        </authorList>
    </citation>
    <scope>NUCLEOTIDE SEQUENCE [LARGE SCALE GENOMIC DNA]</scope>
    <source>
        <strain>K279a</strain>
    </source>
</reference>
<gene>
    <name evidence="1" type="primary">dcd</name>
    <name type="ordered locus">Smlt3442</name>
</gene>
<keyword id="KW-0378">Hydrolase</keyword>
<keyword id="KW-0546">Nucleotide metabolism</keyword>
<keyword id="KW-0547">Nucleotide-binding</keyword>
<keyword id="KW-1185">Reference proteome</keyword>
<protein>
    <recommendedName>
        <fullName evidence="1">dCTP deaminase</fullName>
        <ecNumber evidence="1">3.5.4.13</ecNumber>
    </recommendedName>
    <alternativeName>
        <fullName evidence="1">Deoxycytidine triphosphate deaminase</fullName>
    </alternativeName>
</protein>
<organism>
    <name type="scientific">Stenotrophomonas maltophilia (strain K279a)</name>
    <dbReference type="NCBI Taxonomy" id="522373"/>
    <lineage>
        <taxon>Bacteria</taxon>
        <taxon>Pseudomonadati</taxon>
        <taxon>Pseudomonadota</taxon>
        <taxon>Gammaproteobacteria</taxon>
        <taxon>Lysobacterales</taxon>
        <taxon>Lysobacteraceae</taxon>
        <taxon>Stenotrophomonas</taxon>
        <taxon>Stenotrophomonas maltophilia group</taxon>
    </lineage>
</organism>
<sequence>MSIKSDRWIRRMSEQHGMIEPFEAGQVKQANGERIVSYGTSSYGYDVRCSREFKVFTNINSTIVDPKHFDSGSFVDITADECIIPPNSFALARTVEYFRIPRDTLVVCLGKSTYARCGIIVNVTPLEPEWEGHVTLEFSNTTPLPARIYANEGVAQMLFFQAAADDICETSYRDRGGKYQGQTGVTLPRT</sequence>
<name>DCD_STRMK</name>
<dbReference type="EC" id="3.5.4.13" evidence="1"/>
<dbReference type="EMBL" id="AM743169">
    <property type="protein sequence ID" value="CAQ46868.1"/>
    <property type="molecule type" value="Genomic_DNA"/>
</dbReference>
<dbReference type="RefSeq" id="WP_005410499.1">
    <property type="nucleotide sequence ID" value="NC_010943.1"/>
</dbReference>
<dbReference type="SMR" id="B2FP14"/>
<dbReference type="EnsemblBacteria" id="CAQ46868">
    <property type="protein sequence ID" value="CAQ46868"/>
    <property type="gene ID" value="Smlt3442"/>
</dbReference>
<dbReference type="GeneID" id="93834443"/>
<dbReference type="KEGG" id="sml:Smlt3442"/>
<dbReference type="eggNOG" id="COG0717">
    <property type="taxonomic scope" value="Bacteria"/>
</dbReference>
<dbReference type="HOGENOM" id="CLU_087476_4_0_6"/>
<dbReference type="UniPathway" id="UPA00610">
    <property type="reaction ID" value="UER00665"/>
</dbReference>
<dbReference type="Proteomes" id="UP000008840">
    <property type="component" value="Chromosome"/>
</dbReference>
<dbReference type="GO" id="GO:0008829">
    <property type="term" value="F:dCTP deaminase activity"/>
    <property type="evidence" value="ECO:0007669"/>
    <property type="project" value="UniProtKB-UniRule"/>
</dbReference>
<dbReference type="GO" id="GO:0000166">
    <property type="term" value="F:nucleotide binding"/>
    <property type="evidence" value="ECO:0007669"/>
    <property type="project" value="UniProtKB-KW"/>
</dbReference>
<dbReference type="GO" id="GO:0006226">
    <property type="term" value="P:dUMP biosynthetic process"/>
    <property type="evidence" value="ECO:0007669"/>
    <property type="project" value="UniProtKB-UniPathway"/>
</dbReference>
<dbReference type="GO" id="GO:0006229">
    <property type="term" value="P:dUTP biosynthetic process"/>
    <property type="evidence" value="ECO:0007669"/>
    <property type="project" value="UniProtKB-UniRule"/>
</dbReference>
<dbReference type="GO" id="GO:0015949">
    <property type="term" value="P:nucleobase-containing small molecule interconversion"/>
    <property type="evidence" value="ECO:0007669"/>
    <property type="project" value="TreeGrafter"/>
</dbReference>
<dbReference type="CDD" id="cd07557">
    <property type="entry name" value="trimeric_dUTPase"/>
    <property type="match status" value="1"/>
</dbReference>
<dbReference type="FunFam" id="2.70.40.10:FF:000001">
    <property type="entry name" value="dCTP deaminase"/>
    <property type="match status" value="1"/>
</dbReference>
<dbReference type="Gene3D" id="2.70.40.10">
    <property type="match status" value="1"/>
</dbReference>
<dbReference type="HAMAP" id="MF_00146">
    <property type="entry name" value="dCTP_deaminase"/>
    <property type="match status" value="1"/>
</dbReference>
<dbReference type="InterPro" id="IPR011962">
    <property type="entry name" value="dCTP_deaminase"/>
</dbReference>
<dbReference type="InterPro" id="IPR036157">
    <property type="entry name" value="dUTPase-like_sf"/>
</dbReference>
<dbReference type="InterPro" id="IPR033704">
    <property type="entry name" value="dUTPase_trimeric"/>
</dbReference>
<dbReference type="NCBIfam" id="TIGR02274">
    <property type="entry name" value="dCTP_deam"/>
    <property type="match status" value="1"/>
</dbReference>
<dbReference type="PANTHER" id="PTHR42680">
    <property type="entry name" value="DCTP DEAMINASE"/>
    <property type="match status" value="1"/>
</dbReference>
<dbReference type="PANTHER" id="PTHR42680:SF3">
    <property type="entry name" value="DCTP DEAMINASE"/>
    <property type="match status" value="1"/>
</dbReference>
<dbReference type="Pfam" id="PF22769">
    <property type="entry name" value="DCD"/>
    <property type="match status" value="1"/>
</dbReference>
<dbReference type="SUPFAM" id="SSF51283">
    <property type="entry name" value="dUTPase-like"/>
    <property type="match status" value="1"/>
</dbReference>
<accession>B2FP14</accession>
<feature type="chain" id="PRO_1000096457" description="dCTP deaminase">
    <location>
        <begin position="1"/>
        <end position="190"/>
    </location>
</feature>
<feature type="active site" description="Proton donor/acceptor" evidence="1">
    <location>
        <position position="137"/>
    </location>
</feature>
<feature type="binding site" evidence="1">
    <location>
        <begin position="111"/>
        <end position="116"/>
    </location>
    <ligand>
        <name>dCTP</name>
        <dbReference type="ChEBI" id="CHEBI:61481"/>
    </ligand>
</feature>
<feature type="binding site" evidence="1">
    <location>
        <begin position="135"/>
        <end position="137"/>
    </location>
    <ligand>
        <name>dCTP</name>
        <dbReference type="ChEBI" id="CHEBI:61481"/>
    </ligand>
</feature>
<feature type="binding site" evidence="1">
    <location>
        <position position="156"/>
    </location>
    <ligand>
        <name>dCTP</name>
        <dbReference type="ChEBI" id="CHEBI:61481"/>
    </ligand>
</feature>
<feature type="binding site" evidence="1">
    <location>
        <position position="172"/>
    </location>
    <ligand>
        <name>dCTP</name>
        <dbReference type="ChEBI" id="CHEBI:61481"/>
    </ligand>
</feature>
<feature type="binding site" evidence="1">
    <location>
        <position position="182"/>
    </location>
    <ligand>
        <name>dCTP</name>
        <dbReference type="ChEBI" id="CHEBI:61481"/>
    </ligand>
</feature>
<comment type="function">
    <text evidence="1">Catalyzes the deamination of dCTP to dUTP.</text>
</comment>
<comment type="catalytic activity">
    <reaction evidence="1">
        <text>dCTP + H2O + H(+) = dUTP + NH4(+)</text>
        <dbReference type="Rhea" id="RHEA:22680"/>
        <dbReference type="ChEBI" id="CHEBI:15377"/>
        <dbReference type="ChEBI" id="CHEBI:15378"/>
        <dbReference type="ChEBI" id="CHEBI:28938"/>
        <dbReference type="ChEBI" id="CHEBI:61481"/>
        <dbReference type="ChEBI" id="CHEBI:61555"/>
        <dbReference type="EC" id="3.5.4.13"/>
    </reaction>
</comment>
<comment type="pathway">
    <text evidence="1">Pyrimidine metabolism; dUMP biosynthesis; dUMP from dCTP (dUTP route): step 1/2.</text>
</comment>
<comment type="subunit">
    <text evidence="1">Homotrimer.</text>
</comment>
<comment type="similarity">
    <text evidence="1">Belongs to the dCTP deaminase family.</text>
</comment>
<evidence type="ECO:0000255" key="1">
    <source>
        <dbReference type="HAMAP-Rule" id="MF_00146"/>
    </source>
</evidence>
<proteinExistence type="inferred from homology"/>